<gene>
    <name evidence="1" type="primary">ureD</name>
    <name type="ordered locus">KRH_21670</name>
</gene>
<feature type="chain" id="PRO_0000346569" description="Urease accessory protein UreD">
    <location>
        <begin position="1"/>
        <end position="364"/>
    </location>
</feature>
<feature type="region of interest" description="Disordered" evidence="2">
    <location>
        <begin position="1"/>
        <end position="37"/>
    </location>
</feature>
<feature type="region of interest" description="Disordered" evidence="2">
    <location>
        <begin position="201"/>
        <end position="250"/>
    </location>
</feature>
<feature type="compositionally biased region" description="Low complexity" evidence="2">
    <location>
        <begin position="21"/>
        <end position="37"/>
    </location>
</feature>
<feature type="compositionally biased region" description="Low complexity" evidence="2">
    <location>
        <begin position="209"/>
        <end position="218"/>
    </location>
</feature>
<feature type="compositionally biased region" description="Low complexity" evidence="2">
    <location>
        <begin position="236"/>
        <end position="248"/>
    </location>
</feature>
<name>URED_KOCRD</name>
<protein>
    <recommendedName>
        <fullName evidence="1">Urease accessory protein UreD</fullName>
    </recommendedName>
</protein>
<reference key="1">
    <citation type="journal article" date="2008" name="J. Bacteriol.">
        <title>Complete genome sequence of the soil actinomycete Kocuria rhizophila.</title>
        <authorList>
            <person name="Takarada H."/>
            <person name="Sekine M."/>
            <person name="Kosugi H."/>
            <person name="Matsuo Y."/>
            <person name="Fujisawa T."/>
            <person name="Omata S."/>
            <person name="Kishi E."/>
            <person name="Shimizu A."/>
            <person name="Tsukatani N."/>
            <person name="Tanikawa S."/>
            <person name="Fujita N."/>
            <person name="Harayama S."/>
        </authorList>
    </citation>
    <scope>NUCLEOTIDE SEQUENCE [LARGE SCALE GENOMIC DNA]</scope>
    <source>
        <strain>ATCC 9341 / DSM 348 / NBRC 103217 / DC2201</strain>
    </source>
</reference>
<keyword id="KW-0143">Chaperone</keyword>
<keyword id="KW-0963">Cytoplasm</keyword>
<keyword id="KW-0996">Nickel insertion</keyword>
<keyword id="KW-1185">Reference proteome</keyword>
<organism>
    <name type="scientific">Kocuria rhizophila (strain ATCC 9341 / DSM 348 / NBRC 103217 / DC2201)</name>
    <dbReference type="NCBI Taxonomy" id="378753"/>
    <lineage>
        <taxon>Bacteria</taxon>
        <taxon>Bacillati</taxon>
        <taxon>Actinomycetota</taxon>
        <taxon>Actinomycetes</taxon>
        <taxon>Micrococcales</taxon>
        <taxon>Micrococcaceae</taxon>
        <taxon>Kocuria</taxon>
    </lineage>
</organism>
<dbReference type="EMBL" id="AP009152">
    <property type="protein sequence ID" value="BAG30514.1"/>
    <property type="status" value="ALT_INIT"/>
    <property type="molecule type" value="Genomic_DNA"/>
</dbReference>
<dbReference type="SMR" id="B2GI02"/>
<dbReference type="STRING" id="378753.KRH_21670"/>
<dbReference type="KEGG" id="krh:KRH_21670"/>
<dbReference type="eggNOG" id="COG0829">
    <property type="taxonomic scope" value="Bacteria"/>
</dbReference>
<dbReference type="HOGENOM" id="CLU_056339_5_0_11"/>
<dbReference type="Proteomes" id="UP000008838">
    <property type="component" value="Chromosome"/>
</dbReference>
<dbReference type="GO" id="GO:0005737">
    <property type="term" value="C:cytoplasm"/>
    <property type="evidence" value="ECO:0007669"/>
    <property type="project" value="UniProtKB-SubCell"/>
</dbReference>
<dbReference type="GO" id="GO:0016151">
    <property type="term" value="F:nickel cation binding"/>
    <property type="evidence" value="ECO:0007669"/>
    <property type="project" value="UniProtKB-UniRule"/>
</dbReference>
<dbReference type="HAMAP" id="MF_01384">
    <property type="entry name" value="UreD"/>
    <property type="match status" value="1"/>
</dbReference>
<dbReference type="InterPro" id="IPR002669">
    <property type="entry name" value="UreD"/>
</dbReference>
<dbReference type="PANTHER" id="PTHR33643">
    <property type="entry name" value="UREASE ACCESSORY PROTEIN D"/>
    <property type="match status" value="1"/>
</dbReference>
<dbReference type="PANTHER" id="PTHR33643:SF1">
    <property type="entry name" value="UREASE ACCESSORY PROTEIN D"/>
    <property type="match status" value="1"/>
</dbReference>
<dbReference type="Pfam" id="PF01774">
    <property type="entry name" value="UreD"/>
    <property type="match status" value="1"/>
</dbReference>
<proteinExistence type="inferred from homology"/>
<sequence length="364" mass="38634">MDQDRSGAADAGNPDPGRGPAGSAEARNGAAAASSPAEWAGQLRLSVAERNGRSYAARQFHEGALRVLRPHYLDRSGQVTYTVVNPGGAYLGADAYLLDVAVERDASLVLTTQSATKVYRTPQGPATQDMTVRLGPGSCLEHVPDQLIVYRGGSYLQRTRVDMDPAASLLLAEVVTPGWSPSGESFAYDELRLRTEVRVTPPEVPAPAAPDRGAPAAEAQDRPADPCHVPGGPDRAASSGGTGAAPAGERARRLVVDQLRIRPDAHGGMSGVGFMEGFSHTGQLLVADARLDDELYERLCELVDASGTHSGITRAGTGEPYGVRCVCVRSLAHSTSAITALHRAVVDELRQRWRGQSPLRLRKY</sequence>
<comment type="function">
    <text evidence="1">Required for maturation of urease via the functional incorporation of the urease nickel metallocenter.</text>
</comment>
<comment type="subunit">
    <text evidence="1">UreD, UreF and UreG form a complex that acts as a GTP-hydrolysis-dependent molecular chaperone, activating the urease apoprotein by helping to assemble the nickel containing metallocenter of UreC. The UreE protein probably delivers the nickel.</text>
</comment>
<comment type="subcellular location">
    <subcellularLocation>
        <location evidence="1">Cytoplasm</location>
    </subcellularLocation>
</comment>
<comment type="similarity">
    <text evidence="1">Belongs to the UreD family.</text>
</comment>
<comment type="sequence caution" evidence="3">
    <conflict type="erroneous initiation">
        <sequence resource="EMBL-CDS" id="BAG30514"/>
    </conflict>
</comment>
<accession>B2GI02</accession>
<evidence type="ECO:0000255" key="1">
    <source>
        <dbReference type="HAMAP-Rule" id="MF_01384"/>
    </source>
</evidence>
<evidence type="ECO:0000256" key="2">
    <source>
        <dbReference type="SAM" id="MobiDB-lite"/>
    </source>
</evidence>
<evidence type="ECO:0000305" key="3"/>